<dbReference type="EC" id="4.2.1.32"/>
<dbReference type="EMBL" id="AE014075">
    <property type="protein sequence ID" value="AAN82257.1"/>
    <property type="molecule type" value="Genomic_DNA"/>
</dbReference>
<dbReference type="RefSeq" id="WP_000986807.1">
    <property type="nucleotide sequence ID" value="NZ_CP051263.1"/>
</dbReference>
<dbReference type="SMR" id="Q8FDG8"/>
<dbReference type="STRING" id="199310.c3812"/>
<dbReference type="KEGG" id="ecc:c3812"/>
<dbReference type="eggNOG" id="COG1951">
    <property type="taxonomic scope" value="Bacteria"/>
</dbReference>
<dbReference type="HOGENOM" id="CLU_041245_1_0_6"/>
<dbReference type="BioCyc" id="ECOL199310:C3812-MONOMER"/>
<dbReference type="Proteomes" id="UP000001410">
    <property type="component" value="Chromosome"/>
</dbReference>
<dbReference type="GO" id="GO:0051539">
    <property type="term" value="F:4 iron, 4 sulfur cluster binding"/>
    <property type="evidence" value="ECO:0007669"/>
    <property type="project" value="UniProtKB-KW"/>
</dbReference>
<dbReference type="GO" id="GO:0008730">
    <property type="term" value="F:L(+)-tartrate dehydratase activity"/>
    <property type="evidence" value="ECO:0007669"/>
    <property type="project" value="UniProtKB-EC"/>
</dbReference>
<dbReference type="GO" id="GO:0046872">
    <property type="term" value="F:metal ion binding"/>
    <property type="evidence" value="ECO:0007669"/>
    <property type="project" value="UniProtKB-KW"/>
</dbReference>
<dbReference type="InterPro" id="IPR051208">
    <property type="entry name" value="Class-I_Fumarase/Tartrate_DH"/>
</dbReference>
<dbReference type="InterPro" id="IPR004646">
    <property type="entry name" value="Fe-S_hydro-lyase_TtdA-typ_cat"/>
</dbReference>
<dbReference type="NCBIfam" id="NF006084">
    <property type="entry name" value="PRK08230.1"/>
    <property type="match status" value="1"/>
</dbReference>
<dbReference type="NCBIfam" id="TIGR00722">
    <property type="entry name" value="ttdA_fumA_fumB"/>
    <property type="match status" value="1"/>
</dbReference>
<dbReference type="PANTHER" id="PTHR30389">
    <property type="entry name" value="FUMARATE HYDRATASE-RELATED"/>
    <property type="match status" value="1"/>
</dbReference>
<dbReference type="PANTHER" id="PTHR30389:SF19">
    <property type="entry name" value="L(+)-TARTRATE DEHYDRATASE SUBUNIT ALPHA"/>
    <property type="match status" value="1"/>
</dbReference>
<dbReference type="Pfam" id="PF05681">
    <property type="entry name" value="Fumerase"/>
    <property type="match status" value="1"/>
</dbReference>
<comment type="catalytic activity">
    <reaction>
        <text>(2R,3R)-tartrate = oxaloacetate + H2O</text>
        <dbReference type="Rhea" id="RHEA:15413"/>
        <dbReference type="ChEBI" id="CHEBI:15377"/>
        <dbReference type="ChEBI" id="CHEBI:16452"/>
        <dbReference type="ChEBI" id="CHEBI:30924"/>
        <dbReference type="EC" id="4.2.1.32"/>
    </reaction>
</comment>
<comment type="cofactor">
    <cofactor evidence="3">
        <name>iron-sulfur cluster</name>
        <dbReference type="ChEBI" id="CHEBI:30408"/>
    </cofactor>
</comment>
<comment type="subunit">
    <text evidence="1">Tetramer of two alpha and two beta subunits.</text>
</comment>
<comment type="induction">
    <text evidence="1">Induced by tartrate, via TtdR.</text>
</comment>
<comment type="similarity">
    <text evidence="4">Belongs to the class-I fumarase family.</text>
</comment>
<name>TTDA_ECOL6</name>
<protein>
    <recommendedName>
        <fullName>L(+)-tartrate dehydratase subunit alpha</fullName>
        <shortName>L-TTD alpha</shortName>
        <ecNumber>4.2.1.32</ecNumber>
    </recommendedName>
</protein>
<organism>
    <name type="scientific">Escherichia coli O6:H1 (strain CFT073 / ATCC 700928 / UPEC)</name>
    <dbReference type="NCBI Taxonomy" id="199310"/>
    <lineage>
        <taxon>Bacteria</taxon>
        <taxon>Pseudomonadati</taxon>
        <taxon>Pseudomonadota</taxon>
        <taxon>Gammaproteobacteria</taxon>
        <taxon>Enterobacterales</taxon>
        <taxon>Enterobacteriaceae</taxon>
        <taxon>Escherichia</taxon>
    </lineage>
</organism>
<evidence type="ECO:0000250" key="1"/>
<evidence type="ECO:0000250" key="2">
    <source>
        <dbReference type="UniProtKB" id="E9AE57"/>
    </source>
</evidence>
<evidence type="ECO:0000250" key="3">
    <source>
        <dbReference type="UniProtKB" id="P05847"/>
    </source>
</evidence>
<evidence type="ECO:0000305" key="4"/>
<proteinExistence type="inferred from homology"/>
<accession>Q8FDG8</accession>
<keyword id="KW-0004">4Fe-4S</keyword>
<keyword id="KW-0408">Iron</keyword>
<keyword id="KW-0411">Iron-sulfur</keyword>
<keyword id="KW-0456">Lyase</keyword>
<keyword id="KW-0479">Metal-binding</keyword>
<keyword id="KW-1185">Reference proteome</keyword>
<reference key="1">
    <citation type="journal article" date="2002" name="Proc. Natl. Acad. Sci. U.S.A.">
        <title>Extensive mosaic structure revealed by the complete genome sequence of uropathogenic Escherichia coli.</title>
        <authorList>
            <person name="Welch R.A."/>
            <person name="Burland V."/>
            <person name="Plunkett G. III"/>
            <person name="Redford P."/>
            <person name="Roesch P."/>
            <person name="Rasko D."/>
            <person name="Buckles E.L."/>
            <person name="Liou S.-R."/>
            <person name="Boutin A."/>
            <person name="Hackett J."/>
            <person name="Stroud D."/>
            <person name="Mayhew G.F."/>
            <person name="Rose D.J."/>
            <person name="Zhou S."/>
            <person name="Schwartz D.C."/>
            <person name="Perna N.T."/>
            <person name="Mobley H.L.T."/>
            <person name="Donnenberg M.S."/>
            <person name="Blattner F.R."/>
        </authorList>
    </citation>
    <scope>NUCLEOTIDE SEQUENCE [LARGE SCALE GENOMIC DNA]</scope>
    <source>
        <strain>CFT073 / ATCC 700928 / UPEC</strain>
    </source>
</reference>
<sequence>MMSESNKQQAVNKLTEIVANFTAMISTRMPDDVVDKLKQLKDAETSSMGKIIYHTMFDNMQKAIDLNRPACQDTGEIMFFVKVGSRFPLLGELQSILKQAVEEATVKAPLRHNAVEIFDEVNTGKNTGSGVPWVTWDIVPDGDDAEIEVYMAGGGCTLPGRSKVLMPSEGYEGVVKFVFENISTLAVNACPPVLVGVGIATSVETAAVLSRKAILRPIGSRHPNPKAAELELRLEEGLNRLGIGPQGLTGNSSVMGVHIESAARHPSTIGVAVSTGCWAHRRGTLRVHADLTFENLSHTRSAL</sequence>
<gene>
    <name type="primary">ttdA</name>
    <name type="ordered locus">c3812</name>
</gene>
<feature type="chain" id="PRO_0000262698" description="L(+)-tartrate dehydratase subunit alpha">
    <location>
        <begin position="1"/>
        <end position="303"/>
    </location>
</feature>
<feature type="binding site" evidence="2">
    <location>
        <position position="71"/>
    </location>
    <ligand>
        <name>iron-sulfur cluster</name>
        <dbReference type="ChEBI" id="CHEBI:30408"/>
    </ligand>
</feature>
<feature type="binding site" evidence="2">
    <location>
        <position position="190"/>
    </location>
    <ligand>
        <name>iron-sulfur cluster</name>
        <dbReference type="ChEBI" id="CHEBI:30408"/>
    </ligand>
</feature>
<feature type="binding site" evidence="2">
    <location>
        <position position="277"/>
    </location>
    <ligand>
        <name>iron-sulfur cluster</name>
        <dbReference type="ChEBI" id="CHEBI:30408"/>
    </ligand>
</feature>